<gene>
    <name type="ORF">ATEG_03640</name>
</gene>
<keyword id="KW-1015">Disulfide bond</keyword>
<keyword id="KW-0378">Hydrolase</keyword>
<keyword id="KW-1185">Reference proteome</keyword>
<keyword id="KW-0964">Secreted</keyword>
<keyword id="KW-0719">Serine esterase</keyword>
<keyword id="KW-0732">Signal</keyword>
<protein>
    <recommendedName>
        <fullName>Probable cutinase 5</fullName>
        <ecNumber evidence="5 6">3.1.1.74</ecNumber>
    </recommendedName>
    <alternativeName>
        <fullName>Cutin hydrolase 5</fullName>
    </alternativeName>
</protein>
<dbReference type="EC" id="3.1.1.74" evidence="5 6"/>
<dbReference type="EMBL" id="CH476598">
    <property type="protein sequence ID" value="EAU35442.1"/>
    <property type="molecule type" value="Genomic_DNA"/>
</dbReference>
<dbReference type="RefSeq" id="XP_001212818.1">
    <property type="nucleotide sequence ID" value="XM_001212818.1"/>
</dbReference>
<dbReference type="SMR" id="Q0CRP4"/>
<dbReference type="STRING" id="341663.Q0CRP4"/>
<dbReference type="ESTHER" id="asptn-cuti5">
    <property type="family name" value="Cutinase"/>
</dbReference>
<dbReference type="EnsemblFungi" id="EAU35442">
    <property type="protein sequence ID" value="EAU35442"/>
    <property type="gene ID" value="ATEG_03640"/>
</dbReference>
<dbReference type="GeneID" id="4318500"/>
<dbReference type="VEuPathDB" id="FungiDB:ATEG_03640"/>
<dbReference type="eggNOG" id="ENOG502SI38">
    <property type="taxonomic scope" value="Eukaryota"/>
</dbReference>
<dbReference type="HOGENOM" id="CLU_040058_2_0_1"/>
<dbReference type="OMA" id="PPVIFIY"/>
<dbReference type="OrthoDB" id="3225429at2759"/>
<dbReference type="Proteomes" id="UP000007963">
    <property type="component" value="Unassembled WGS sequence"/>
</dbReference>
<dbReference type="GO" id="GO:0005576">
    <property type="term" value="C:extracellular region"/>
    <property type="evidence" value="ECO:0007669"/>
    <property type="project" value="UniProtKB-SubCell"/>
</dbReference>
<dbReference type="GO" id="GO:0050525">
    <property type="term" value="F:cutinase activity"/>
    <property type="evidence" value="ECO:0000250"/>
    <property type="project" value="UniProtKB"/>
</dbReference>
<dbReference type="GO" id="GO:0016052">
    <property type="term" value="P:carbohydrate catabolic process"/>
    <property type="evidence" value="ECO:0007669"/>
    <property type="project" value="TreeGrafter"/>
</dbReference>
<dbReference type="FunFam" id="3.40.50.1820:FF:000235">
    <property type="entry name" value="Cutinase 1"/>
    <property type="match status" value="1"/>
</dbReference>
<dbReference type="Gene3D" id="3.40.50.1820">
    <property type="entry name" value="alpha/beta hydrolase"/>
    <property type="match status" value="1"/>
</dbReference>
<dbReference type="InterPro" id="IPR029058">
    <property type="entry name" value="AB_hydrolase_fold"/>
</dbReference>
<dbReference type="InterPro" id="IPR000675">
    <property type="entry name" value="Cutinase/axe"/>
</dbReference>
<dbReference type="InterPro" id="IPR043580">
    <property type="entry name" value="CUTINASE_1"/>
</dbReference>
<dbReference type="InterPro" id="IPR043579">
    <property type="entry name" value="CUTINASE_2"/>
</dbReference>
<dbReference type="InterPro" id="IPR011150">
    <property type="entry name" value="Cutinase_monf"/>
</dbReference>
<dbReference type="PANTHER" id="PTHR48250:SF3">
    <property type="entry name" value="CUTINASE 1-RELATED"/>
    <property type="match status" value="1"/>
</dbReference>
<dbReference type="PANTHER" id="PTHR48250">
    <property type="entry name" value="CUTINASE 2-RELATED"/>
    <property type="match status" value="1"/>
</dbReference>
<dbReference type="Pfam" id="PF01083">
    <property type="entry name" value="Cutinase"/>
    <property type="match status" value="1"/>
</dbReference>
<dbReference type="PRINTS" id="PR00129">
    <property type="entry name" value="CUTINASE"/>
</dbReference>
<dbReference type="SMART" id="SM01110">
    <property type="entry name" value="Cutinase"/>
    <property type="match status" value="1"/>
</dbReference>
<dbReference type="SUPFAM" id="SSF53474">
    <property type="entry name" value="alpha/beta-Hydrolases"/>
    <property type="match status" value="1"/>
</dbReference>
<dbReference type="PROSITE" id="PS00155">
    <property type="entry name" value="CUTINASE_1"/>
    <property type="match status" value="1"/>
</dbReference>
<dbReference type="PROSITE" id="PS00931">
    <property type="entry name" value="CUTINASE_2"/>
    <property type="match status" value="1"/>
</dbReference>
<feature type="signal peptide" evidence="4">
    <location>
        <begin position="1"/>
        <end position="18"/>
    </location>
</feature>
<feature type="chain" id="PRO_0000395259" description="Probable cutinase 5">
    <location>
        <begin position="19"/>
        <end position="220"/>
    </location>
</feature>
<feature type="active site" description="Nucleophile" evidence="1">
    <location>
        <position position="132"/>
    </location>
</feature>
<feature type="active site" evidence="1">
    <location>
        <position position="187"/>
    </location>
</feature>
<feature type="active site" description="Proton donor/acceptor" evidence="1">
    <location>
        <position position="200"/>
    </location>
</feature>
<feature type="site" description="Transition state stabilizer" evidence="1">
    <location>
        <position position="53"/>
    </location>
</feature>
<feature type="site" description="Transition state stabilizer" evidence="1">
    <location>
        <position position="133"/>
    </location>
</feature>
<feature type="disulfide bond" evidence="3">
    <location>
        <begin position="42"/>
        <end position="121"/>
    </location>
</feature>
<feature type="disulfide bond" evidence="3">
    <location>
        <begin position="68"/>
        <end position="82"/>
    </location>
</feature>
<feature type="disulfide bond" evidence="3">
    <location>
        <begin position="183"/>
        <end position="190"/>
    </location>
</feature>
<proteinExistence type="inferred from homology"/>
<evidence type="ECO:0000250" key="1">
    <source>
        <dbReference type="UniProtKB" id="P00590"/>
    </source>
</evidence>
<evidence type="ECO:0000250" key="2">
    <source>
        <dbReference type="UniProtKB" id="P11373"/>
    </source>
</evidence>
<evidence type="ECO:0000250" key="3">
    <source>
        <dbReference type="UniProtKB" id="P52956"/>
    </source>
</evidence>
<evidence type="ECO:0000255" key="4"/>
<evidence type="ECO:0000255" key="5">
    <source>
        <dbReference type="PROSITE-ProRule" id="PRU10108"/>
    </source>
</evidence>
<evidence type="ECO:0000255" key="6">
    <source>
        <dbReference type="PROSITE-ProRule" id="PRU10109"/>
    </source>
</evidence>
<evidence type="ECO:0000305" key="7"/>
<comment type="function">
    <text evidence="1">Catalyzes the hydrolysis of complex carboxylic polyesters found in the cell wall of plants (By similarity). Degrades cutin, a macromolecule that forms the structure of the plant cuticle (By similarity).</text>
</comment>
<comment type="catalytic activity">
    <reaction evidence="5 6">
        <text>cutin + H2O = cutin monomers.</text>
        <dbReference type="EC" id="3.1.1.74"/>
    </reaction>
</comment>
<comment type="subcellular location">
    <subcellularLocation>
        <location evidence="2">Secreted</location>
    </subcellularLocation>
</comment>
<comment type="similarity">
    <text evidence="7">Belongs to the cutinase family.</text>
</comment>
<organism>
    <name type="scientific">Aspergillus terreus (strain NIH 2624 / FGSC A1156)</name>
    <dbReference type="NCBI Taxonomy" id="341663"/>
    <lineage>
        <taxon>Eukaryota</taxon>
        <taxon>Fungi</taxon>
        <taxon>Dikarya</taxon>
        <taxon>Ascomycota</taxon>
        <taxon>Pezizomycotina</taxon>
        <taxon>Eurotiomycetes</taxon>
        <taxon>Eurotiomycetidae</taxon>
        <taxon>Eurotiales</taxon>
        <taxon>Aspergillaceae</taxon>
        <taxon>Aspergillus</taxon>
        <taxon>Aspergillus subgen. Circumdati</taxon>
    </lineage>
</organism>
<reference key="1">
    <citation type="submission" date="2005-09" db="EMBL/GenBank/DDBJ databases">
        <title>Annotation of the Aspergillus terreus NIH2624 genome.</title>
        <authorList>
            <person name="Birren B.W."/>
            <person name="Lander E.S."/>
            <person name="Galagan J.E."/>
            <person name="Nusbaum C."/>
            <person name="Devon K."/>
            <person name="Henn M."/>
            <person name="Ma L.-J."/>
            <person name="Jaffe D.B."/>
            <person name="Butler J."/>
            <person name="Alvarez P."/>
            <person name="Gnerre S."/>
            <person name="Grabherr M."/>
            <person name="Kleber M."/>
            <person name="Mauceli E.W."/>
            <person name="Brockman W."/>
            <person name="Rounsley S."/>
            <person name="Young S.K."/>
            <person name="LaButti K."/>
            <person name="Pushparaj V."/>
            <person name="DeCaprio D."/>
            <person name="Crawford M."/>
            <person name="Koehrsen M."/>
            <person name="Engels R."/>
            <person name="Montgomery P."/>
            <person name="Pearson M."/>
            <person name="Howarth C."/>
            <person name="Larson L."/>
            <person name="Luoma S."/>
            <person name="White J."/>
            <person name="Alvarado L."/>
            <person name="Kodira C.D."/>
            <person name="Zeng Q."/>
            <person name="Oleary S."/>
            <person name="Yandava C."/>
            <person name="Denning D.W."/>
            <person name="Nierman W.C."/>
            <person name="Milne T."/>
            <person name="Madden K."/>
        </authorList>
    </citation>
    <scope>NUCLEOTIDE SEQUENCE [LARGE SCALE GENOMIC DNA]</scope>
    <source>
        <strain>NIH 2624 / FGSC A1156</strain>
    </source>
</reference>
<sequence length="220" mass="23020">MVALHTLLLTAFAAVSLANPIPAPELEARQIINANDLENGVCKPVVLIFARGSTELGNMGAIAGMPTCNALKLALGSQNVACQGVGGAYTASLIPNFLPANTNQASIREATGVFEMAHTRCPNSQIVAGGYSQGSAVMDNTIQDLPDVIKNKVKGVVLFGFTRNLQDLGRIPNYPKEQTKVICAVGDLVCVGTLIITPAHLTYTLNAPEAAQFLASMVSV</sequence>
<accession>Q0CRP4</accession>
<name>CUTI5_ASPTN</name>